<keyword id="KW-0997">Cell inner membrane</keyword>
<keyword id="KW-1003">Cell membrane</keyword>
<keyword id="KW-0378">Hydrolase</keyword>
<keyword id="KW-0444">Lipid biosynthesis</keyword>
<keyword id="KW-0443">Lipid metabolism</keyword>
<keyword id="KW-0472">Membrane</keyword>
<keyword id="KW-0594">Phospholipid biosynthesis</keyword>
<keyword id="KW-1208">Phospholipid metabolism</keyword>
<keyword id="KW-1185">Reference proteome</keyword>
<keyword id="KW-0812">Transmembrane</keyword>
<keyword id="KW-1133">Transmembrane helix</keyword>
<sequence length="249" mass="27971">MKKTGYFLLAVVIVAAVAGIGYWKLAANPNALRDIVLQQCVPNQLQQQNPAPCAEVKPDAGYVVFKDRNGPLQYLLMPTYRINGTESPLLVEPYTPNFFWLAWQARSFMSQKYGKDIPDSAISLAINSRSGRTQNHFHIHISCLRPDVRAQLDDNLAKVSTRWLPLPGGLRGNEYLARRVTESELAQRSPFMMLAEEVPDAREHMGSYALAVVRQSDDSFVLLATQRNLLAFNLASAEEIQDHQCEILQ</sequence>
<reference key="1">
    <citation type="submission" date="2007-08" db="EMBL/GenBank/DDBJ databases">
        <authorList>
            <consortium name="The Citrobacter koseri Genome Sequencing Project"/>
            <person name="McClelland M."/>
            <person name="Sanderson E.K."/>
            <person name="Porwollik S."/>
            <person name="Spieth J."/>
            <person name="Clifton W.S."/>
            <person name="Latreille P."/>
            <person name="Courtney L."/>
            <person name="Wang C."/>
            <person name="Pepin K."/>
            <person name="Bhonagiri V."/>
            <person name="Nash W."/>
            <person name="Johnson M."/>
            <person name="Thiruvilangam P."/>
            <person name="Wilson R."/>
        </authorList>
    </citation>
    <scope>NUCLEOTIDE SEQUENCE [LARGE SCALE GENOMIC DNA]</scope>
    <source>
        <strain>ATCC BAA-895 / CDC 4225-83 / SGSC4696</strain>
    </source>
</reference>
<gene>
    <name evidence="1" type="primary">cdh</name>
    <name type="ordered locus">CKO_03081</name>
</gene>
<accession>A8AL09</accession>
<proteinExistence type="inferred from homology"/>
<dbReference type="EC" id="3.6.1.26" evidence="1"/>
<dbReference type="EMBL" id="CP000822">
    <property type="protein sequence ID" value="ABV14172.1"/>
    <property type="molecule type" value="Genomic_DNA"/>
</dbReference>
<dbReference type="RefSeq" id="WP_012133879.1">
    <property type="nucleotide sequence ID" value="NC_009792.1"/>
</dbReference>
<dbReference type="SMR" id="A8AL09"/>
<dbReference type="STRING" id="290338.CKO_03081"/>
<dbReference type="GeneID" id="45136883"/>
<dbReference type="KEGG" id="cko:CKO_03081"/>
<dbReference type="HOGENOM" id="CLU_077117_0_1_6"/>
<dbReference type="OrthoDB" id="481399at2"/>
<dbReference type="UniPathway" id="UPA00609">
    <property type="reaction ID" value="UER00664"/>
</dbReference>
<dbReference type="Proteomes" id="UP000008148">
    <property type="component" value="Chromosome"/>
</dbReference>
<dbReference type="GO" id="GO:0005886">
    <property type="term" value="C:plasma membrane"/>
    <property type="evidence" value="ECO:0007669"/>
    <property type="project" value="UniProtKB-SubCell"/>
</dbReference>
<dbReference type="GO" id="GO:0008715">
    <property type="term" value="F:CDP-diacylglycerol diphosphatase activity"/>
    <property type="evidence" value="ECO:0007669"/>
    <property type="project" value="UniProtKB-UniRule"/>
</dbReference>
<dbReference type="GO" id="GO:0046342">
    <property type="term" value="P:CDP-diacylglycerol catabolic process"/>
    <property type="evidence" value="ECO:0007669"/>
    <property type="project" value="UniProtKB-UniRule"/>
</dbReference>
<dbReference type="GO" id="GO:0008654">
    <property type="term" value="P:phospholipid biosynthetic process"/>
    <property type="evidence" value="ECO:0007669"/>
    <property type="project" value="UniProtKB-KW"/>
</dbReference>
<dbReference type="Gene3D" id="3.30.428.30">
    <property type="entry name" value="HIT family - CDH-like"/>
    <property type="match status" value="1"/>
</dbReference>
<dbReference type="HAMAP" id="MF_00319">
    <property type="entry name" value="Cdh"/>
    <property type="match status" value="1"/>
</dbReference>
<dbReference type="InterPro" id="IPR003763">
    <property type="entry name" value="CDP-diacylglyc_Pase"/>
</dbReference>
<dbReference type="InterPro" id="IPR015993">
    <property type="entry name" value="CDP-diacylglyc_Pase_proteobac"/>
</dbReference>
<dbReference type="InterPro" id="IPR036265">
    <property type="entry name" value="HIT-like_sf"/>
</dbReference>
<dbReference type="NCBIfam" id="TIGR00672">
    <property type="entry name" value="cdh"/>
    <property type="match status" value="1"/>
</dbReference>
<dbReference type="NCBIfam" id="NF003986">
    <property type="entry name" value="PRK05471.1-5"/>
    <property type="match status" value="1"/>
</dbReference>
<dbReference type="NCBIfam" id="NF003987">
    <property type="entry name" value="PRK05471.1-6"/>
    <property type="match status" value="1"/>
</dbReference>
<dbReference type="Pfam" id="PF02611">
    <property type="entry name" value="CDH"/>
    <property type="match status" value="1"/>
</dbReference>
<dbReference type="PIRSF" id="PIRSF001273">
    <property type="entry name" value="CDH"/>
    <property type="match status" value="1"/>
</dbReference>
<dbReference type="SUPFAM" id="SSF54197">
    <property type="entry name" value="HIT-like"/>
    <property type="match status" value="1"/>
</dbReference>
<name>CDH_CITK8</name>
<protein>
    <recommendedName>
        <fullName evidence="1">CDP-diacylglycerol pyrophosphatase</fullName>
        <ecNumber evidence="1">3.6.1.26</ecNumber>
    </recommendedName>
    <alternativeName>
        <fullName evidence="1">CDP-diacylglycerol phosphatidylhydrolase</fullName>
    </alternativeName>
    <alternativeName>
        <fullName evidence="1">CDP-diglyceride hydrolase</fullName>
    </alternativeName>
</protein>
<comment type="catalytic activity">
    <reaction evidence="1">
        <text>a CDP-1,2-diacyl-sn-glycerol + H2O = a 1,2-diacyl-sn-glycero-3-phosphate + CMP + 2 H(+)</text>
        <dbReference type="Rhea" id="RHEA:15221"/>
        <dbReference type="ChEBI" id="CHEBI:15377"/>
        <dbReference type="ChEBI" id="CHEBI:15378"/>
        <dbReference type="ChEBI" id="CHEBI:58332"/>
        <dbReference type="ChEBI" id="CHEBI:58608"/>
        <dbReference type="ChEBI" id="CHEBI:60377"/>
        <dbReference type="EC" id="3.6.1.26"/>
    </reaction>
</comment>
<comment type="pathway">
    <text evidence="1">Phospholipid metabolism; CDP-diacylglycerol degradation; phosphatidate from CDP-diacylglycerol: step 1/1.</text>
</comment>
<comment type="subcellular location">
    <subcellularLocation>
        <location evidence="1">Cell inner membrane</location>
        <topology evidence="1">Single-pass membrane protein</topology>
    </subcellularLocation>
</comment>
<comment type="similarity">
    <text evidence="1">Belongs to the Cdh family.</text>
</comment>
<organism>
    <name type="scientific">Citrobacter koseri (strain ATCC BAA-895 / CDC 4225-83 / SGSC4696)</name>
    <dbReference type="NCBI Taxonomy" id="290338"/>
    <lineage>
        <taxon>Bacteria</taxon>
        <taxon>Pseudomonadati</taxon>
        <taxon>Pseudomonadota</taxon>
        <taxon>Gammaproteobacteria</taxon>
        <taxon>Enterobacterales</taxon>
        <taxon>Enterobacteriaceae</taxon>
        <taxon>Citrobacter</taxon>
    </lineage>
</organism>
<evidence type="ECO:0000255" key="1">
    <source>
        <dbReference type="HAMAP-Rule" id="MF_00319"/>
    </source>
</evidence>
<feature type="chain" id="PRO_1000019262" description="CDP-diacylglycerol pyrophosphatase">
    <location>
        <begin position="1"/>
        <end position="249"/>
    </location>
</feature>
<feature type="transmembrane region" description="Helical" evidence="1">
    <location>
        <begin position="7"/>
        <end position="27"/>
    </location>
</feature>